<comment type="function">
    <text evidence="1">Involved in the degradation of the plant hormone indole-3-acetic acid (IAA). Catalyzes the hydrolysis of the cyclic amide bond (lactam) of isatin (1H-indole-2,3-dione) to yield isatinate (2-(2-aminophenyl)-2-oxoacetate).</text>
</comment>
<comment type="catalytic activity">
    <reaction evidence="1">
        <text>isatin + H2O = isatinate + H(+)</text>
        <dbReference type="Rhea" id="RHEA:43232"/>
        <dbReference type="ChEBI" id="CHEBI:15377"/>
        <dbReference type="ChEBI" id="CHEBI:15378"/>
        <dbReference type="ChEBI" id="CHEBI:27539"/>
        <dbReference type="ChEBI" id="CHEBI:82904"/>
        <dbReference type="EC" id="3.5.2.20"/>
    </reaction>
</comment>
<comment type="cofactor">
    <cofactor evidence="1">
        <name>Mn(2+)</name>
        <dbReference type="ChEBI" id="CHEBI:29035"/>
    </cofactor>
    <text evidence="1">Binds 1 manganese ion per subunit.</text>
</comment>
<comment type="activity regulation">
    <text evidence="1">Inhibited by thioisatinate.</text>
</comment>
<comment type="biophysicochemical properties">
    <kinetics>
        <KM evidence="1">4.8 uM for isatin</KM>
        <Vmax evidence="1">0.24 umol/sec/mg enzyme</Vmax>
        <text evidence="1">kcat is 24 sec(-1) for isatin as substrate.</text>
    </kinetics>
</comment>
<comment type="subunit">
    <text evidence="1">Homodimer.</text>
</comment>
<comment type="similarity">
    <text evidence="3">Belongs to the Cyclase 1 superfamily.</text>
</comment>
<name>ISAHY_ROSAI</name>
<dbReference type="EC" id="3.5.2.20" evidence="1"/>
<dbReference type="EMBL" id="AAUW01000001">
    <property type="protein sequence ID" value="EAV46082.1"/>
    <property type="molecule type" value="Genomic_DNA"/>
</dbReference>
<dbReference type="RefSeq" id="WP_006931350.1">
    <property type="nucleotide sequence ID" value="NZ_AAUW01000001.1"/>
</dbReference>
<dbReference type="PDB" id="4J0N">
    <property type="method" value="X-ray"/>
    <property type="resolution" value="2.25 A"/>
    <property type="chains" value="A/B=1-263"/>
</dbReference>
<dbReference type="PDB" id="4M8D">
    <property type="method" value="X-ray"/>
    <property type="resolution" value="1.90 A"/>
    <property type="chains" value="A/B/C/D/E/F/G/H/I/J/K/L=1-263"/>
</dbReference>
<dbReference type="PDBsum" id="4J0N"/>
<dbReference type="PDBsum" id="4M8D"/>
<dbReference type="SMR" id="A0NLY7"/>
<dbReference type="GeneID" id="68844624"/>
<dbReference type="eggNOG" id="COG1878">
    <property type="taxonomic scope" value="Bacteria"/>
</dbReference>
<dbReference type="OrthoDB" id="9777007at2"/>
<dbReference type="BRENDA" id="3.5.2.20">
    <property type="organism ID" value="9995"/>
</dbReference>
<dbReference type="EvolutionaryTrace" id="A0NLY7"/>
<dbReference type="Proteomes" id="UP000004848">
    <property type="component" value="Unassembled WGS sequence"/>
</dbReference>
<dbReference type="GO" id="GO:0004061">
    <property type="term" value="F:arylformamidase activity"/>
    <property type="evidence" value="ECO:0007669"/>
    <property type="project" value="InterPro"/>
</dbReference>
<dbReference type="GO" id="GO:0016812">
    <property type="term" value="F:hydrolase activity, acting on carbon-nitrogen (but not peptide) bonds, in cyclic amides"/>
    <property type="evidence" value="ECO:0000314"/>
    <property type="project" value="UniProtKB"/>
</dbReference>
<dbReference type="GO" id="GO:0030145">
    <property type="term" value="F:manganese ion binding"/>
    <property type="evidence" value="ECO:0000314"/>
    <property type="project" value="UniProtKB"/>
</dbReference>
<dbReference type="GO" id="GO:0019441">
    <property type="term" value="P:L-tryptophan catabolic process to kynurenine"/>
    <property type="evidence" value="ECO:0007669"/>
    <property type="project" value="InterPro"/>
</dbReference>
<dbReference type="FunFam" id="3.50.30.50:FF:000009">
    <property type="entry name" value="Isatin hydrolase"/>
    <property type="match status" value="1"/>
</dbReference>
<dbReference type="Gene3D" id="3.50.30.50">
    <property type="entry name" value="Putative cyclase"/>
    <property type="match status" value="1"/>
</dbReference>
<dbReference type="InterPro" id="IPR007325">
    <property type="entry name" value="KFase/CYL"/>
</dbReference>
<dbReference type="InterPro" id="IPR037175">
    <property type="entry name" value="KFase_sf"/>
</dbReference>
<dbReference type="PANTHER" id="PTHR31118">
    <property type="entry name" value="CYCLASE-LIKE PROTEIN 2"/>
    <property type="match status" value="1"/>
</dbReference>
<dbReference type="PANTHER" id="PTHR31118:SF12">
    <property type="entry name" value="CYCLASE-LIKE PROTEIN 2"/>
    <property type="match status" value="1"/>
</dbReference>
<dbReference type="Pfam" id="PF04199">
    <property type="entry name" value="Cyclase"/>
    <property type="match status" value="1"/>
</dbReference>
<dbReference type="SUPFAM" id="SSF102198">
    <property type="entry name" value="Putative cyclase"/>
    <property type="match status" value="1"/>
</dbReference>
<reference key="1">
    <citation type="submission" date="2006-05" db="EMBL/GenBank/DDBJ databases">
        <authorList>
            <person name="King G."/>
            <person name="Ferriera S."/>
            <person name="Johnson J."/>
            <person name="Kravitz S."/>
            <person name="Beeson K."/>
            <person name="Sutton G."/>
            <person name="Rogers Y.-H."/>
            <person name="Friedman R."/>
            <person name="Frazier M."/>
            <person name="Venter J.C."/>
        </authorList>
    </citation>
    <scope>NUCLEOTIDE SEQUENCE [LARGE SCALE GENOMIC DNA]</scope>
    <source>
        <strain evidence="6">ATCC 25650 / DSM 13394 / JCM 20685 / NBRC 16684 / NCIMB 2208 / IAM 12614 / B1</strain>
    </source>
</reference>
<reference key="2">
    <citation type="journal article" date="2014" name="J. Biol. Chem.">
        <title>A proton wire and water channel revealed in the crystal structure of isatin hydrolase.</title>
        <authorList>
            <person name="Bjerregaard-Andersen K."/>
            <person name="Sommer T."/>
            <person name="Jensen J.K."/>
            <person name="Jochimsen B."/>
            <person name="Etzerodt M."/>
            <person name="Morth J.P."/>
        </authorList>
    </citation>
    <scope>X-RAY CRYSTALLOGRAPHY (1.90 ANGSTROMS) IN COMPLEX WITH SUBSTRATE ANALOG AND MANGANESE ION</scope>
    <scope>FUNCTION</scope>
    <scope>CATALYTIC ACTIVITY</scope>
    <scope>BIOPHYSICOCHEMICAL PROPERTIES</scope>
    <scope>MUTAGENESIS OF SER-225</scope>
    <scope>ACTIVITY REGULATION</scope>
    <scope>COFACTOR</scope>
    <scope>ACTIVE SITE</scope>
    <scope>SUBUNIT</scope>
    <source>
        <strain>ATCC 25650 / DSM 13394 / JCM 20685 / NBRC 16684 / NCIMB 2208 / IAM 12614 / B1</strain>
    </source>
</reference>
<accession>A0NLY7</accession>
<evidence type="ECO:0000269" key="1">
    <source>
    </source>
</evidence>
<evidence type="ECO:0000303" key="2">
    <source>
    </source>
</evidence>
<evidence type="ECO:0000305" key="3"/>
<evidence type="ECO:0000305" key="4">
    <source>
    </source>
</evidence>
<evidence type="ECO:0000312" key="5">
    <source>
        <dbReference type="EMBL" id="EAV46082.1"/>
    </source>
</evidence>
<evidence type="ECO:0000312" key="6">
    <source>
        <dbReference type="Proteomes" id="UP000004848"/>
    </source>
</evidence>
<evidence type="ECO:0007744" key="7">
    <source>
        <dbReference type="PDB" id="4J0N"/>
    </source>
</evidence>
<evidence type="ECO:0007744" key="8">
    <source>
        <dbReference type="PDB" id="4M8D"/>
    </source>
</evidence>
<evidence type="ECO:0007829" key="9">
    <source>
        <dbReference type="PDB" id="4M8D"/>
    </source>
</evidence>
<gene>
    <name evidence="5" type="ORF">SIAM614_09648</name>
</gene>
<organism>
    <name type="scientific">Roseibium aggregatum (strain ATCC 25650 / DSM 13394 / JCM 20685 / NBRC 16684 / NCIMB 2208 / IAM 12614 / B1)</name>
    <name type="common">Stappia aggregata</name>
    <dbReference type="NCBI Taxonomy" id="384765"/>
    <lineage>
        <taxon>Bacteria</taxon>
        <taxon>Pseudomonadati</taxon>
        <taxon>Pseudomonadota</taxon>
        <taxon>Alphaproteobacteria</taxon>
        <taxon>Hyphomicrobiales</taxon>
        <taxon>Stappiaceae</taxon>
        <taxon>Roseibium</taxon>
    </lineage>
</organism>
<sequence length="263" mass="28053">MSAQSALSGLGAKLLSGEVEVVDCTGVLGPNTPILQLPPDFAKNTPKVEIHKISEYDSDGPFFAWNWMVLGEHSGTHFDAPHHWITGKDYSDGFTDTLDVQRLIAPVNVIDCSKESAADPDFLLTADLIKAWEAEHGEIGAGEWVVMRTDWDKRAGDEAAFLNADETGPHSPGPTPDAIEYLLSKKIVGWGSQCIGTDAGQAGGMEPPFPAHNLLHRDNCFGLASLANLDKLPAKGAILIAAPLKIERGTGSPIRALALVPKA</sequence>
<proteinExistence type="evidence at protein level"/>
<protein>
    <recommendedName>
        <fullName evidence="2">Isatin hydrolase</fullName>
        <ecNumber evidence="1">3.5.2.20</ecNumber>
    </recommendedName>
    <alternativeName>
        <fullName evidence="3">Isatin amidohydrolase</fullName>
    </alternativeName>
    <alternativeName>
        <fullName evidence="2">Isatin hydrolase isoform b</fullName>
        <shortName evidence="2">IH-b</shortName>
    </alternativeName>
</protein>
<keyword id="KW-0002">3D-structure</keyword>
<keyword id="KW-0378">Hydrolase</keyword>
<keyword id="KW-0464">Manganese</keyword>
<keyword id="KW-0479">Metal-binding</keyword>
<feature type="chain" id="PRO_0000444711" description="Isatin hydrolase">
    <location>
        <begin position="1"/>
        <end position="263"/>
    </location>
</feature>
<feature type="active site" description="Proton donor/acceptor" evidence="4">
    <location>
        <position position="83"/>
    </location>
</feature>
<feature type="binding site" evidence="4">
    <location>
        <begin position="62"/>
        <end position="66"/>
    </location>
    <ligand>
        <name>substrate</name>
    </ligand>
</feature>
<feature type="binding site" evidence="1 7 8">
    <location>
        <position position="73"/>
    </location>
    <ligand>
        <name>Mn(2+)</name>
        <dbReference type="ChEBI" id="CHEBI:29035"/>
    </ligand>
</feature>
<feature type="binding site" evidence="1 7 8">
    <location>
        <position position="77"/>
    </location>
    <ligand>
        <name>Mn(2+)</name>
        <dbReference type="ChEBI" id="CHEBI:29035"/>
    </ligand>
</feature>
<feature type="binding site" evidence="1 7 8">
    <location>
        <position position="79"/>
    </location>
    <ligand>
        <name>Mn(2+)</name>
        <dbReference type="ChEBI" id="CHEBI:29035"/>
    </ligand>
</feature>
<feature type="binding site" evidence="1 8">
    <location>
        <position position="212"/>
    </location>
    <ligand>
        <name>substrate</name>
    </ligand>
</feature>
<feature type="mutagenesis site" description="No effect on the affinity for isatin and on the catalytic efficiency." evidence="1">
    <original>S</original>
    <variation>A</variation>
    <location>
        <position position="225"/>
    </location>
</feature>
<feature type="mutagenesis site" description="2-fold decrease of the affinity for isatin and 4-fold increase of the catalytic efficiency." evidence="1">
    <original>S</original>
    <variation>C</variation>
    <location>
        <position position="225"/>
    </location>
</feature>
<feature type="helix" evidence="9">
    <location>
        <begin position="3"/>
        <end position="16"/>
    </location>
</feature>
<feature type="strand" evidence="9">
    <location>
        <begin position="17"/>
        <end position="23"/>
    </location>
</feature>
<feature type="turn" evidence="9">
    <location>
        <begin position="39"/>
        <end position="41"/>
    </location>
</feature>
<feature type="strand" evidence="9">
    <location>
        <begin position="49"/>
        <end position="57"/>
    </location>
</feature>
<feature type="strand" evidence="9">
    <location>
        <begin position="60"/>
        <end position="73"/>
    </location>
</feature>
<feature type="strand" evidence="9">
    <location>
        <begin position="75"/>
        <end position="79"/>
    </location>
</feature>
<feature type="helix" evidence="9">
    <location>
        <begin position="81"/>
        <end position="83"/>
    </location>
</feature>
<feature type="helix" evidence="9">
    <location>
        <begin position="85"/>
        <end position="87"/>
    </location>
</feature>
<feature type="turn" evidence="9">
    <location>
        <begin position="95"/>
        <end position="97"/>
    </location>
</feature>
<feature type="helix" evidence="9">
    <location>
        <begin position="100"/>
        <end position="103"/>
    </location>
</feature>
<feature type="strand" evidence="9">
    <location>
        <begin position="104"/>
        <end position="111"/>
    </location>
</feature>
<feature type="helix" evidence="9">
    <location>
        <begin position="113"/>
        <end position="118"/>
    </location>
</feature>
<feature type="helix" evidence="9">
    <location>
        <begin position="126"/>
        <end position="136"/>
    </location>
</feature>
<feature type="strand" evidence="9">
    <location>
        <begin position="144"/>
        <end position="148"/>
    </location>
</feature>
<feature type="helix" evidence="9">
    <location>
        <begin position="151"/>
        <end position="154"/>
    </location>
</feature>
<feature type="helix" evidence="9">
    <location>
        <begin position="158"/>
        <end position="162"/>
    </location>
</feature>
<feature type="helix" evidence="9">
    <location>
        <begin position="176"/>
        <end position="184"/>
    </location>
</feature>
<feature type="strand" evidence="9">
    <location>
        <begin position="188"/>
        <end position="198"/>
    </location>
</feature>
<feature type="helix" evidence="9">
    <location>
        <begin position="202"/>
        <end position="204"/>
    </location>
</feature>
<feature type="strand" evidence="9">
    <location>
        <begin position="205"/>
        <end position="209"/>
    </location>
</feature>
<feature type="helix" evidence="9">
    <location>
        <begin position="210"/>
        <end position="217"/>
    </location>
</feature>
<feature type="strand" evidence="9">
    <location>
        <begin position="221"/>
        <end position="225"/>
    </location>
</feature>
<feature type="helix" evidence="9">
    <location>
        <begin position="229"/>
        <end position="231"/>
    </location>
</feature>
<feature type="strand" evidence="9">
    <location>
        <begin position="234"/>
        <end position="236"/>
    </location>
</feature>
<feature type="strand" evidence="9">
    <location>
        <begin position="238"/>
        <end position="240"/>
    </location>
</feature>
<feature type="strand" evidence="9">
    <location>
        <begin position="250"/>
        <end position="253"/>
    </location>
</feature>
<feature type="strand" evidence="9">
    <location>
        <begin position="257"/>
        <end position="261"/>
    </location>
</feature>